<proteinExistence type="evidence at protein level"/>
<comment type="function">
    <text evidence="1 2 3 4 5 7 8 10 11 14">Antitoxin component of a type II toxin-antitoxin (TA) system. Counteracts the effect of cognate toxin RelE via direct protein-protein interaction, preventing RelE from entering the ribosome A site and thus inhibiting its endoribonuclease activity. An autorepressor of relBE operon transcription. 2 RelB dimers bind to 2 operator sequences; DNA-binding and repression is stronger when complexed with toxin/corepressor RelE by conditional cooperativity (PubMed:18501926, PubMed:22981948). Increased transcription rate of relBE and activation of relE is consistent with a lower level of RelB in starved cells due to degradation of RelB by protease Lon.</text>
</comment>
<comment type="function">
    <text evidence="7">Seems to be a principal mediator of cell death in liquid media.</text>
</comment>
<comment type="subunit">
    <text evidence="1 4 5 6 8 11">Homotetramer formed by dimerization of dimers in solution (PubMed:18501926, PubMed:19747491). Forms an RelB(2)-RelE(2) heterotetramer (PubMed:18501926, PubMed:22981948). Also forms an RelB(2)-RelE heterotrimer (PubMed:18532983, PubMed:19747491). The RelB(2)-RelE complex is probably the one that binds DNA and represses transcription, possibly as 2 heterotrimers, 1 bound to each of 2 operators (PubMed:19747491, PubMed:22981948).</text>
</comment>
<comment type="interaction">
    <interactant intactId="EBI-1124503">
        <id>P0C079</id>
    </interactant>
    <interactant intactId="EBI-549378">
        <id>P0C077</id>
        <label>relE</label>
    </interactant>
    <organismsDiffer>false</organismsDiffer>
    <experiments>3</experiments>
</comment>
<comment type="induction">
    <text evidence="2 4 5 8 11 12 13 14">By amino acid starvation, by glucose starvation and by chloramphenicol; induction is independent of ppGpp. Autorepressed by RelB, RelE acts as a corepressor (PubMed:18501926, PubMed:19747491, PubMed:22981948, PubMed:9767574). Member of the relBEF operon (PubMed:2990907). Operon induced by ectopic expression of toxins HicA, HipA, MazF, MqsR and RelE, but not by YafQ (PubMed:23432955).</text>
</comment>
<comment type="domain">
    <text evidence="4 5">Dimerizes and binds DNA via its N-terminus (residues 1-50), binds toxin RelE via the C-terminus (residues 47-79) (PubMed:18501926, PubMed:18532983). Tetramerization probably requires amino acids between residues 66 and 71 (PubMed:18501926).</text>
</comment>
<comment type="PTM">
    <text evidence="2 8">Probably degraded by Lon protease during amino acid starvation (PubMed:11717402). Degraded in vitro by Lon (PubMed:19747491).</text>
</comment>
<comment type="disruption phenotype">
    <text evidence="2 7 9">Essential, it cannot be deleted if a copy of relE remains in the cell. Cells missing relBE have a higher steady-state level of translation during amino acid starvation than wild-type cells. They survive antibiotic treatment in log phase better than wild-type cells. Cells missing mazE-mazF survive hydroxyurea treatment better than wild-type; further disruption of relE-relB and tonB yields even better survival (PubMed:20005847).</text>
</comment>
<comment type="miscellaneous">
    <text evidence="15">A number of site directed mutants give rise to a delayed relaxed phenotype; RNA synthesis resumes 10 minutes after amino acid starvation, an unusually slow recovery from periods of starvation, accumulation of a translation inhibitor.</text>
</comment>
<comment type="miscellaneous">
    <text evidence="8">There are estimated to be 550-1100 RelB and 50-100 RelE molecules in rapidly growing cells of MG1655; as they have quite high affinity for each other (dissociation constant of 0.33 nM) there is probably less than 1 free RelE molecule per cell. The RelB(2)-RelE complex has a half-life of over 70 minutes.</text>
</comment>
<comment type="similarity">
    <text evidence="17">Belongs to the RelB/DinJ antitoxin family.</text>
</comment>
<dbReference type="EMBL" id="X02405">
    <property type="protein sequence ID" value="CAA26250.1"/>
    <property type="molecule type" value="Genomic_DNA"/>
</dbReference>
<dbReference type="EMBL" id="U00096">
    <property type="protein sequence ID" value="AAC74637.1"/>
    <property type="molecule type" value="Genomic_DNA"/>
</dbReference>
<dbReference type="EMBL" id="AP009048">
    <property type="protein sequence ID" value="BAA15263.1"/>
    <property type="molecule type" value="Genomic_DNA"/>
</dbReference>
<dbReference type="PIR" id="A22830">
    <property type="entry name" value="BVECRB"/>
</dbReference>
<dbReference type="RefSeq" id="NP_416082.1">
    <property type="nucleotide sequence ID" value="NC_000913.3"/>
</dbReference>
<dbReference type="RefSeq" id="WP_000534858.1">
    <property type="nucleotide sequence ID" value="NZ_SSUV01000001.1"/>
</dbReference>
<dbReference type="PDB" id="2K29">
    <property type="method" value="NMR"/>
    <property type="chains" value="A/B=1-50"/>
</dbReference>
<dbReference type="PDB" id="2KC8">
    <property type="method" value="NMR"/>
    <property type="chains" value="B=47-79"/>
</dbReference>
<dbReference type="PDB" id="4FXE">
    <property type="method" value="X-ray"/>
    <property type="resolution" value="2.75 A"/>
    <property type="chains" value="A/B/C=1-79"/>
</dbReference>
<dbReference type="PDBsum" id="2K29"/>
<dbReference type="PDBsum" id="2KC8"/>
<dbReference type="PDBsum" id="4FXE"/>
<dbReference type="BMRB" id="P0C079"/>
<dbReference type="SMR" id="P0C079"/>
<dbReference type="BioGRID" id="4260244">
    <property type="interactions" value="140"/>
</dbReference>
<dbReference type="ComplexPortal" id="CPX-1081">
    <property type="entry name" value="RelBE toxin-antitoxin complex"/>
</dbReference>
<dbReference type="DIP" id="DIP-48258N"/>
<dbReference type="FunCoup" id="P0C079">
    <property type="interactions" value="10"/>
</dbReference>
<dbReference type="IntAct" id="P0C079">
    <property type="interactions" value="6"/>
</dbReference>
<dbReference type="STRING" id="511145.b1564"/>
<dbReference type="jPOST" id="P0C079"/>
<dbReference type="PaxDb" id="511145-b1564"/>
<dbReference type="EnsemblBacteria" id="AAC74637">
    <property type="protein sequence ID" value="AAC74637"/>
    <property type="gene ID" value="b1564"/>
</dbReference>
<dbReference type="GeneID" id="948308"/>
<dbReference type="GeneID" id="98387559"/>
<dbReference type="KEGG" id="ecj:JW1556"/>
<dbReference type="KEGG" id="eco:b1564"/>
<dbReference type="KEGG" id="ecoc:C3026_09025"/>
<dbReference type="PATRIC" id="fig|1411691.4.peg.698"/>
<dbReference type="EchoBASE" id="EB0829"/>
<dbReference type="eggNOG" id="COG3077">
    <property type="taxonomic scope" value="Bacteria"/>
</dbReference>
<dbReference type="HOGENOM" id="CLU_169573_0_0_6"/>
<dbReference type="InParanoid" id="P0C079"/>
<dbReference type="OMA" id="TINIRVN"/>
<dbReference type="OrthoDB" id="7221783at2"/>
<dbReference type="PhylomeDB" id="P0C079"/>
<dbReference type="BioCyc" id="EcoCyc:EG10836-MONOMER"/>
<dbReference type="BioCyc" id="MetaCyc:EG10836-MONOMER"/>
<dbReference type="EvolutionaryTrace" id="P0C079"/>
<dbReference type="PRO" id="PR:P0C079"/>
<dbReference type="Proteomes" id="UP000000625">
    <property type="component" value="Chromosome"/>
</dbReference>
<dbReference type="CollecTF" id="EXPREG_000008a0"/>
<dbReference type="GO" id="GO:0032993">
    <property type="term" value="C:protein-DNA complex"/>
    <property type="evidence" value="ECO:0000315"/>
    <property type="project" value="CollecTF"/>
</dbReference>
<dbReference type="GO" id="GO:0110001">
    <property type="term" value="C:toxin-antitoxin complex"/>
    <property type="evidence" value="ECO:0000353"/>
    <property type="project" value="ComplexPortal"/>
</dbReference>
<dbReference type="GO" id="GO:0001217">
    <property type="term" value="F:DNA-binding transcription repressor activity"/>
    <property type="evidence" value="ECO:0000315"/>
    <property type="project" value="CollecTF"/>
</dbReference>
<dbReference type="GO" id="GO:0097351">
    <property type="term" value="F:toxin sequestering activity"/>
    <property type="evidence" value="ECO:0000269"/>
    <property type="project" value="DisProt"/>
</dbReference>
<dbReference type="GO" id="GO:0000976">
    <property type="term" value="F:transcription cis-regulatory region binding"/>
    <property type="evidence" value="ECO:0000315"/>
    <property type="project" value="CollecTF"/>
</dbReference>
<dbReference type="GO" id="GO:0006351">
    <property type="term" value="P:DNA-templated transcription"/>
    <property type="evidence" value="ECO:0000269"/>
    <property type="project" value="EcoCyc"/>
</dbReference>
<dbReference type="GO" id="GO:0006355">
    <property type="term" value="P:regulation of DNA-templated transcription"/>
    <property type="evidence" value="ECO:0000303"/>
    <property type="project" value="ComplexPortal"/>
</dbReference>
<dbReference type="GO" id="GO:0040008">
    <property type="term" value="P:regulation of growth"/>
    <property type="evidence" value="ECO:0000303"/>
    <property type="project" value="ComplexPortal"/>
</dbReference>
<dbReference type="GO" id="GO:0044010">
    <property type="term" value="P:single-species biofilm formation"/>
    <property type="evidence" value="ECO:0000314"/>
    <property type="project" value="ComplexPortal"/>
</dbReference>
<dbReference type="DisProt" id="DP02950"/>
<dbReference type="FunFam" id="1.10.1220.10:FF:000005">
    <property type="entry name" value="Bifunctional antitoxin/transcriptional repressor RelB"/>
    <property type="match status" value="1"/>
</dbReference>
<dbReference type="Gene3D" id="1.10.1220.10">
    <property type="entry name" value="Met repressor-like"/>
    <property type="match status" value="1"/>
</dbReference>
<dbReference type="InterPro" id="IPR013321">
    <property type="entry name" value="Arc_rbn_hlx_hlx"/>
</dbReference>
<dbReference type="InterPro" id="IPR007337">
    <property type="entry name" value="RelB/DinJ"/>
</dbReference>
<dbReference type="NCBIfam" id="NF008412">
    <property type="entry name" value="PRK11235.1"/>
    <property type="match status" value="1"/>
</dbReference>
<dbReference type="NCBIfam" id="TIGR02384">
    <property type="entry name" value="RelB_DinJ"/>
    <property type="match status" value="1"/>
</dbReference>
<dbReference type="PANTHER" id="PTHR38781">
    <property type="entry name" value="ANTITOXIN DINJ-RELATED"/>
    <property type="match status" value="1"/>
</dbReference>
<dbReference type="PANTHER" id="PTHR38781:SF1">
    <property type="entry name" value="ANTITOXIN DINJ-RELATED"/>
    <property type="match status" value="1"/>
</dbReference>
<dbReference type="Pfam" id="PF04221">
    <property type="entry name" value="RelB"/>
    <property type="match status" value="1"/>
</dbReference>
<keyword id="KW-0002">3D-structure</keyword>
<keyword id="KW-0238">DNA-binding</keyword>
<keyword id="KW-1185">Reference proteome</keyword>
<keyword id="KW-0678">Repressor</keyword>
<keyword id="KW-0346">Stress response</keyword>
<keyword id="KW-1277">Toxin-antitoxin system</keyword>
<keyword id="KW-0804">Transcription</keyword>
<keyword id="KW-0805">Transcription regulation</keyword>
<sequence length="79" mass="9071">MGSINLRIDDELKARSYAALEKMGVTPSEALRLMLEYIADNERLPFKQTLLSDEDAELVEIVKERLRNPKPVRVTLDEL</sequence>
<accession>P0C079</accession>
<accession>P07007</accession>
<feature type="chain" id="PRO_0000097243" description="Antitoxin RelB">
    <location>
        <begin position="1"/>
        <end position="79"/>
    </location>
</feature>
<feature type="mutagenesis site" description="Loss of DNA binding, 100-fold derepression of operon, still binds RelE." evidence="4 8">
    <original>R</original>
    <variation>A</variation>
    <location>
        <position position="7"/>
    </location>
</feature>
<feature type="mutagenesis site" description="43-fold derepression of operon, partial loss of DNA-binding, still binds RelE." evidence="8">
    <original>I</original>
    <variation>A</variation>
    <location>
        <position position="8"/>
    </location>
</feature>
<feature type="mutagenesis site" description="83-fold derepression of operon, loss of DNA-binding, still binds RelE." evidence="8">
    <original>K</original>
    <variation>A</variation>
    <location>
        <position position="13"/>
    </location>
</feature>
<feature type="mutagenesis site" description="100-fold derepression of operon, loss of DNA-binding, still binds RelE." evidence="8">
    <original>S</original>
    <variation>L</variation>
    <variation>R</variation>
    <location>
        <position position="28"/>
    </location>
</feature>
<feature type="mutagenesis site" description="In relB101; a delayed relaxed phenotype." evidence="13">
    <original>A</original>
    <variation>T</variation>
    <location>
        <position position="39"/>
    </location>
</feature>
<feature type="mutagenesis site" description="In relB102; a delayed relaxed phenotype." evidence="13">
    <original>P</original>
    <variation>L</variation>
    <location>
        <position position="45"/>
    </location>
</feature>
<feature type="mutagenesis site" description="In relB35; a delayed relaxed phenotype." evidence="13">
    <original>P</original>
    <variation>T</variation>
    <location>
        <position position="45"/>
    </location>
</feature>
<feature type="mutagenesis site" description="Protein no longer tetramerizes." evidence="4">
    <location>
        <begin position="66"/>
        <end position="79"/>
    </location>
</feature>
<feature type="mutagenesis site" description="Protein still tetramerizes." evidence="4">
    <location>
        <begin position="71"/>
        <end position="79"/>
    </location>
</feature>
<feature type="strand" evidence="18">
    <location>
        <begin position="3"/>
        <end position="7"/>
    </location>
</feature>
<feature type="helix" evidence="18">
    <location>
        <begin position="10"/>
        <end position="23"/>
    </location>
</feature>
<feature type="helix" evidence="18">
    <location>
        <begin position="27"/>
        <end position="41"/>
    </location>
</feature>
<feature type="helix" evidence="18">
    <location>
        <begin position="49"/>
        <end position="67"/>
    </location>
</feature>
<feature type="strand" evidence="18">
    <location>
        <begin position="71"/>
        <end position="74"/>
    </location>
</feature>
<feature type="helix" evidence="18">
    <location>
        <begin position="76"/>
        <end position="78"/>
    </location>
</feature>
<evidence type="ECO:0000269" key="1">
    <source>
    </source>
</evidence>
<evidence type="ECO:0000269" key="2">
    <source>
    </source>
</evidence>
<evidence type="ECO:0000269" key="3">
    <source>
    </source>
</evidence>
<evidence type="ECO:0000269" key="4">
    <source>
    </source>
</evidence>
<evidence type="ECO:0000269" key="5">
    <source>
    </source>
</evidence>
<evidence type="ECO:0000269" key="6">
    <source>
    </source>
</evidence>
<evidence type="ECO:0000269" key="7">
    <source>
    </source>
</evidence>
<evidence type="ECO:0000269" key="8">
    <source>
    </source>
</evidence>
<evidence type="ECO:0000269" key="9">
    <source>
    </source>
</evidence>
<evidence type="ECO:0000269" key="10">
    <source>
    </source>
</evidence>
<evidence type="ECO:0000269" key="11">
    <source>
    </source>
</evidence>
<evidence type="ECO:0000269" key="12">
    <source>
    </source>
</evidence>
<evidence type="ECO:0000269" key="13">
    <source>
    </source>
</evidence>
<evidence type="ECO:0000269" key="14">
    <source>
    </source>
</evidence>
<evidence type="ECO:0000303" key="15">
    <source>
    </source>
</evidence>
<evidence type="ECO:0000303" key="16">
    <source>
    </source>
</evidence>
<evidence type="ECO:0000305" key="17"/>
<evidence type="ECO:0007829" key="18">
    <source>
        <dbReference type="PDB" id="4FXE"/>
    </source>
</evidence>
<reference key="1">
    <citation type="journal article" date="1985" name="EMBO J.">
        <title>Sequence of the relB transcription unit from Escherichia coli and identification of the relB gene.</title>
        <authorList>
            <person name="Bech F.W."/>
            <person name="Joergensen S.T."/>
            <person name="Diderichsen B."/>
            <person name="Karlstroem O.H."/>
        </authorList>
    </citation>
    <scope>NUCLEOTIDE SEQUENCE [GENOMIC DNA]</scope>
    <scope>OPERON</scope>
    <scope>MUTAGENESIS OF ALA-39 AND PRO-45</scope>
    <source>
        <strain>K12 / CS520</strain>
    </source>
</reference>
<reference key="2">
    <citation type="journal article" date="1996" name="DNA Res.">
        <title>A 570-kb DNA sequence of the Escherichia coli K-12 genome corresponding to the 28.0-40.1 min region on the linkage map.</title>
        <authorList>
            <person name="Aiba H."/>
            <person name="Baba T."/>
            <person name="Fujita K."/>
            <person name="Hayashi K."/>
            <person name="Inada T."/>
            <person name="Isono K."/>
            <person name="Itoh T."/>
            <person name="Kasai H."/>
            <person name="Kashimoto K."/>
            <person name="Kimura S."/>
            <person name="Kitakawa M."/>
            <person name="Kitagawa M."/>
            <person name="Makino K."/>
            <person name="Miki T."/>
            <person name="Mizobuchi K."/>
            <person name="Mori H."/>
            <person name="Mori T."/>
            <person name="Motomura K."/>
            <person name="Nakade S."/>
            <person name="Nakamura Y."/>
            <person name="Nashimoto H."/>
            <person name="Nishio Y."/>
            <person name="Oshima T."/>
            <person name="Saito N."/>
            <person name="Sampei G."/>
            <person name="Seki Y."/>
            <person name="Sivasundaram S."/>
            <person name="Tagami H."/>
            <person name="Takeda J."/>
            <person name="Takemoto K."/>
            <person name="Takeuchi Y."/>
            <person name="Wada C."/>
            <person name="Yamamoto Y."/>
            <person name="Horiuchi T."/>
        </authorList>
    </citation>
    <scope>NUCLEOTIDE SEQUENCE [LARGE SCALE GENOMIC DNA]</scope>
    <source>
        <strain>K12 / W3110 / ATCC 27325 / DSM 5911</strain>
    </source>
</reference>
<reference key="3">
    <citation type="journal article" date="1997" name="Science">
        <title>The complete genome sequence of Escherichia coli K-12.</title>
        <authorList>
            <person name="Blattner F.R."/>
            <person name="Plunkett G. III"/>
            <person name="Bloch C.A."/>
            <person name="Perna N.T."/>
            <person name="Burland V."/>
            <person name="Riley M."/>
            <person name="Collado-Vides J."/>
            <person name="Glasner J.D."/>
            <person name="Rode C.K."/>
            <person name="Mayhew G.F."/>
            <person name="Gregor J."/>
            <person name="Davis N.W."/>
            <person name="Kirkpatrick H.A."/>
            <person name="Goeden M.A."/>
            <person name="Rose D.J."/>
            <person name="Mau B."/>
            <person name="Shao Y."/>
        </authorList>
    </citation>
    <scope>NUCLEOTIDE SEQUENCE [LARGE SCALE GENOMIC DNA]</scope>
    <source>
        <strain>K12 / MG1655 / ATCC 47076</strain>
    </source>
</reference>
<reference key="4">
    <citation type="journal article" date="2006" name="Mol. Syst. Biol.">
        <title>Highly accurate genome sequences of Escherichia coli K-12 strains MG1655 and W3110.</title>
        <authorList>
            <person name="Hayashi K."/>
            <person name="Morooka N."/>
            <person name="Yamamoto Y."/>
            <person name="Fujita K."/>
            <person name="Isono K."/>
            <person name="Choi S."/>
            <person name="Ohtsubo E."/>
            <person name="Baba T."/>
            <person name="Wanner B.L."/>
            <person name="Mori H."/>
            <person name="Horiuchi T."/>
        </authorList>
    </citation>
    <scope>NUCLEOTIDE SEQUENCE [LARGE SCALE GENOMIC DNA]</scope>
    <source>
        <strain>K12 / W3110 / ATCC 27325 / DSM 5911</strain>
    </source>
</reference>
<reference key="5">
    <citation type="journal article" date="1998" name="Mol. Microbiol.">
        <title>The Escherichia coli relBE genes belong to a new toxin-antitoxin gene family.</title>
        <authorList>
            <person name="Gotfredsen M."/>
            <person name="Gerdes K."/>
        </authorList>
    </citation>
    <scope>FUNCTION AS AN ANTITOXIN</scope>
    <scope>FUNCTION AS A TRANSCRIPTIONAL REPRESSOR</scope>
    <scope>INDUCTION</scope>
</reference>
<reference key="6">
    <citation type="journal article" date="2001" name="J. Bacteriol.">
        <title>Purification of the RelB and RelE proteins of Escherichia coli: RelE binds to RelB and to ribosomes.</title>
        <authorList>
            <person name="Galvani C."/>
            <person name="Terry J."/>
            <person name="Ishiguro E.E."/>
        </authorList>
    </citation>
    <scope>FUNCTION</scope>
    <scope>SUBUNIT</scope>
    <scope>DNA-BINDING</scope>
</reference>
<reference key="7">
    <citation type="journal article" date="2001" name="Proc. Natl. Acad. Sci. U.S.A.">
        <title>RelE, a global inhibitor of translation, is activated during nutritional stress.</title>
        <authorList>
            <person name="Christensen S.K."/>
            <person name="Mikkelsen M."/>
            <person name="Pedersen K."/>
            <person name="Gerdes K."/>
        </authorList>
    </citation>
    <scope>FUNCTION</scope>
    <scope>CLEAVAGE BY LON PROTEASE</scope>
    <scope>INDUCTION</scope>
    <scope>DISRUPTION PHENOTYPE</scope>
</reference>
<reference key="8">
    <citation type="journal article" date="2002" name="Mol. Microbiol.">
        <title>Rapid induction and reversal of a bacteriostatic condition by controlled expression of toxins and antitoxins.</title>
        <authorList>
            <person name="Pedersen K."/>
            <person name="Christensen S.K."/>
            <person name="Gerdes K."/>
        </authorList>
    </citation>
    <scope>FUNCTION AS AN ANTITOXIN</scope>
    <source>
        <strain>K12</strain>
    </source>
</reference>
<reference key="9">
    <citation type="journal article" date="2008" name="Mol. Microbiol.">
        <title>Messenger RNA interferase RelE controls relBE transcription by conditional cooperativity.</title>
        <authorList>
            <person name="Overgaard M."/>
            <person name="Borch J."/>
            <person name="Joergensen M.G."/>
            <person name="Gerdes K."/>
        </authorList>
    </citation>
    <scope>FUNCTION</scope>
    <scope>INDUCTION</scope>
    <scope>DOMAIN</scope>
    <scope>DNA-BINDING</scope>
    <source>
        <strain>K12</strain>
    </source>
</reference>
<reference key="10">
    <citation type="journal article" date="2009" name="J. Mol. Biol.">
        <title>RelB and RelE of Escherichia coli form a tight complex that represses transcription via the ribbon-helix-helix motif in RelB.</title>
        <authorList>
            <person name="Overgaard M."/>
            <person name="Borch J."/>
            <person name="Gerdes K."/>
        </authorList>
    </citation>
    <scope>FUNCTION</scope>
    <scope>SUBUNIT</scope>
    <scope>INDUCTION</scope>
    <scope>CLEAVAGE BY LON PROTEASE</scope>
    <scope>DNA-BINDING</scope>
    <scope>MUTAGENESIS OF ARG-7; ILE-8; LYS-13 AND SER-28</scope>
    <source>
        <strain>K12</strain>
    </source>
</reference>
<reference key="11">
    <citation type="journal article" date="2009" name="Mol. Cell">
        <title>Hydroxyurea induces hydroxyl radical-mediated cell death in Escherichia coli.</title>
        <authorList>
            <person name="Davies B.W."/>
            <person name="Kohanski M.A."/>
            <person name="Simmons L.A."/>
            <person name="Winkler J.A."/>
            <person name="Collins J.J."/>
            <person name="Walker G.C."/>
        </authorList>
    </citation>
    <scope>DISRUPTION PHENOTYPE</scope>
    <source>
        <strain>K12 / MC4100 / ATCC 35695 / DSM 6574</strain>
    </source>
</reference>
<reference key="12">
    <citation type="journal article" date="2009" name="PLoS ONE">
        <title>A differential effect of E. coli toxin-antitoxin systems on cell death in liquid media and biofilm formation.</title>
        <authorList>
            <person name="Kolodkin-Gal I."/>
            <person name="Verdiger R."/>
            <person name="Shlosberg-Fedida A."/>
            <person name="Engelberg-Kulka H."/>
        </authorList>
    </citation>
    <scope>FUNCTION IN CELL DEATH</scope>
    <scope>DISRUPTION PHENOTYPE</scope>
    <source>
        <strain>K12 / MC4100 / ATCC 35695 / DSM 6574</strain>
    </source>
</reference>
<reference key="13">
    <citation type="journal article" date="2012" name="J. Bacteriol.">
        <title>RelE-mediated dormancy is enhanced at high cell density in Escherichia coli.</title>
        <authorList>
            <person name="Tashiro Y."/>
            <person name="Kawata K."/>
            <person name="Taniuchi A."/>
            <person name="Kakinuma K."/>
            <person name="May T."/>
            <person name="Okabe S."/>
        </authorList>
    </citation>
    <scope>FUNCTION</scope>
    <source>
        <strain>K12 / MG1655 / ATCC 47076</strain>
    </source>
</reference>
<reference key="14">
    <citation type="journal article" date="2013" name="BMC Microbiol.">
        <title>Transcriptional cross-activation between toxin-antitoxin systems of Escherichia coli.</title>
        <authorList>
            <person name="Kasari V."/>
            <person name="Mets T."/>
            <person name="Tenson T."/>
            <person name="Kaldalu N."/>
        </authorList>
    </citation>
    <scope>INDUCTION BY OTHER TA SYSTEMS</scope>
    <source>
        <strain>K12 / BW25113</strain>
    </source>
</reference>
<reference key="15">
    <citation type="journal article" date="2008" name="J. Mol. Biol.">
        <title>Structural mechanism of transcriptional autorepression of the Escherichia coli RelB/RelE antitoxin/toxin module.</title>
        <authorList>
            <person name="Li G.Y."/>
            <person name="Zhang Y."/>
            <person name="Inouye M."/>
            <person name="Ikura M."/>
        </authorList>
    </citation>
    <scope>STRUCTURE BY NMR OF 1-50</scope>
    <scope>FUNCTION</scope>
    <scope>DNA-BINDING</scope>
    <scope>SUBUNIT</scope>
    <scope>INDUCTION</scope>
    <scope>DOMAINS</scope>
    <scope>MUTAGENESIS OF ARG-7; 66-LEU--LEU-79 AND 71-PRO--LEU-79</scope>
</reference>
<reference key="16">
    <citation type="journal article" date="2009" name="J. Biol. Chem.">
        <title>Inhibitory mechanism of Escherichia coli RelE-RelB toxin-antitoxin module involves a helix displacement near an mRNA interferase active site.</title>
        <authorList>
            <person name="Li G.Y."/>
            <person name="Zhang Y."/>
            <person name="Inouye M."/>
            <person name="Ikura M."/>
        </authorList>
    </citation>
    <scope>STRUCTURE BY NMR OF 47-79 IN COMPLEX WITH RELE</scope>
    <scope>SUBUNIT</scope>
</reference>
<reference key="17">
    <citation type="journal article" date="2012" name="Structure">
        <title>The crystal structure of the intact E. coli RelBE toxin-antitoxin complex provides the structural basis for conditional cooperativity.</title>
        <authorList>
            <person name="Boggild A."/>
            <person name="Sofos N."/>
            <person name="Andersen K.R."/>
            <person name="Feddersen A."/>
            <person name="Easter A.D."/>
            <person name="Passmore L.A."/>
            <person name="Brodersen D.E."/>
        </authorList>
    </citation>
    <scope>X-RAY CRYSTALLOGRAPHY (2.75 ANGSTROMS) IN COMPLEX WITH RELB</scope>
    <scope>FUNCTION</scope>
    <scope>SUBUNIT</scope>
    <scope>INDUCTION</scope>
</reference>
<gene>
    <name type="primary">relB</name>
    <name type="ordered locus">b1564</name>
    <name type="ordered locus">JW1556</name>
</gene>
<organism>
    <name type="scientific">Escherichia coli (strain K12)</name>
    <dbReference type="NCBI Taxonomy" id="83333"/>
    <lineage>
        <taxon>Bacteria</taxon>
        <taxon>Pseudomonadati</taxon>
        <taxon>Pseudomonadota</taxon>
        <taxon>Gammaproteobacteria</taxon>
        <taxon>Enterobacterales</taxon>
        <taxon>Enterobacteriaceae</taxon>
        <taxon>Escherichia</taxon>
    </lineage>
</organism>
<protein>
    <recommendedName>
        <fullName evidence="16">Antitoxin RelB</fullName>
    </recommendedName>
</protein>
<name>RELB_ECOLI</name>